<comment type="subunit">
    <text evidence="1">Forms oligomers.</text>
</comment>
<comment type="subcellular location">
    <subcellularLocation>
        <location evidence="1">Cytoplasm</location>
        <location evidence="1">Nucleoid</location>
    </subcellularLocation>
</comment>
<comment type="similarity">
    <text evidence="1">Belongs to the MraZ family.</text>
</comment>
<gene>
    <name evidence="1" type="primary">mraZ</name>
    <name type="ordered locus">COXBURSA331_A0204</name>
</gene>
<organism>
    <name type="scientific">Coxiella burnetii (strain RSA 331 / Henzerling II)</name>
    <dbReference type="NCBI Taxonomy" id="360115"/>
    <lineage>
        <taxon>Bacteria</taxon>
        <taxon>Pseudomonadati</taxon>
        <taxon>Pseudomonadota</taxon>
        <taxon>Gammaproteobacteria</taxon>
        <taxon>Legionellales</taxon>
        <taxon>Coxiellaceae</taxon>
        <taxon>Coxiella</taxon>
    </lineage>
</organism>
<feature type="chain" id="PRO_1000084002" description="Transcriptional regulator MraZ">
    <location>
        <begin position="1"/>
        <end position="152"/>
    </location>
</feature>
<feature type="domain" description="SpoVT-AbrB 1" evidence="2">
    <location>
        <begin position="5"/>
        <end position="52"/>
    </location>
</feature>
<feature type="domain" description="SpoVT-AbrB 2" evidence="2">
    <location>
        <begin position="81"/>
        <end position="124"/>
    </location>
</feature>
<name>MRAZ_COXBR</name>
<sequence length="152" mass="17339">MFRGLNPIAVDAKGRIAIPARYREPIESEADGILVVTIDTEERCLLIYTHPQWEQIEQKLENLPSYHPASRRIQRLLIGHATEVELDRSGRILIPPVLREYAGLGSMVMLVGQGKKFELWGKSQWETAREDWLAEELPKGDDLPPELRSLSL</sequence>
<accession>A9NA24</accession>
<reference key="1">
    <citation type="submission" date="2007-11" db="EMBL/GenBank/DDBJ databases">
        <title>Genome sequencing of phylogenetically and phenotypically diverse Coxiella burnetii isolates.</title>
        <authorList>
            <person name="Seshadri R."/>
            <person name="Samuel J.E."/>
        </authorList>
    </citation>
    <scope>NUCLEOTIDE SEQUENCE [LARGE SCALE GENOMIC DNA]</scope>
    <source>
        <strain>RSA 331 / Henzerling II</strain>
    </source>
</reference>
<dbReference type="EMBL" id="CP000890">
    <property type="protein sequence ID" value="ABX78622.1"/>
    <property type="molecule type" value="Genomic_DNA"/>
</dbReference>
<dbReference type="SMR" id="A9NA24"/>
<dbReference type="KEGG" id="cbs:COXBURSA331_A0204"/>
<dbReference type="HOGENOM" id="CLU_107907_2_0_6"/>
<dbReference type="GO" id="GO:0005737">
    <property type="term" value="C:cytoplasm"/>
    <property type="evidence" value="ECO:0007669"/>
    <property type="project" value="UniProtKB-UniRule"/>
</dbReference>
<dbReference type="GO" id="GO:0009295">
    <property type="term" value="C:nucleoid"/>
    <property type="evidence" value="ECO:0007669"/>
    <property type="project" value="UniProtKB-SubCell"/>
</dbReference>
<dbReference type="GO" id="GO:0003700">
    <property type="term" value="F:DNA-binding transcription factor activity"/>
    <property type="evidence" value="ECO:0007669"/>
    <property type="project" value="UniProtKB-UniRule"/>
</dbReference>
<dbReference type="GO" id="GO:0000976">
    <property type="term" value="F:transcription cis-regulatory region binding"/>
    <property type="evidence" value="ECO:0007669"/>
    <property type="project" value="TreeGrafter"/>
</dbReference>
<dbReference type="GO" id="GO:2000143">
    <property type="term" value="P:negative regulation of DNA-templated transcription initiation"/>
    <property type="evidence" value="ECO:0007669"/>
    <property type="project" value="TreeGrafter"/>
</dbReference>
<dbReference type="CDD" id="cd16321">
    <property type="entry name" value="MraZ_C"/>
    <property type="match status" value="1"/>
</dbReference>
<dbReference type="CDD" id="cd16320">
    <property type="entry name" value="MraZ_N"/>
    <property type="match status" value="1"/>
</dbReference>
<dbReference type="Gene3D" id="3.40.1550.20">
    <property type="entry name" value="Transcriptional regulator MraZ domain"/>
    <property type="match status" value="1"/>
</dbReference>
<dbReference type="HAMAP" id="MF_01008">
    <property type="entry name" value="MraZ"/>
    <property type="match status" value="1"/>
</dbReference>
<dbReference type="InterPro" id="IPR003444">
    <property type="entry name" value="MraZ"/>
</dbReference>
<dbReference type="InterPro" id="IPR035644">
    <property type="entry name" value="MraZ_C"/>
</dbReference>
<dbReference type="InterPro" id="IPR020603">
    <property type="entry name" value="MraZ_dom"/>
</dbReference>
<dbReference type="InterPro" id="IPR035642">
    <property type="entry name" value="MraZ_N"/>
</dbReference>
<dbReference type="InterPro" id="IPR038619">
    <property type="entry name" value="MraZ_sf"/>
</dbReference>
<dbReference type="InterPro" id="IPR007159">
    <property type="entry name" value="SpoVT-AbrB_dom"/>
</dbReference>
<dbReference type="InterPro" id="IPR037914">
    <property type="entry name" value="SpoVT-AbrB_sf"/>
</dbReference>
<dbReference type="NCBIfam" id="TIGR00242">
    <property type="entry name" value="division/cell wall cluster transcriptional repressor MraZ"/>
    <property type="match status" value="1"/>
</dbReference>
<dbReference type="PANTHER" id="PTHR34701">
    <property type="entry name" value="TRANSCRIPTIONAL REGULATOR MRAZ"/>
    <property type="match status" value="1"/>
</dbReference>
<dbReference type="PANTHER" id="PTHR34701:SF1">
    <property type="entry name" value="TRANSCRIPTIONAL REGULATOR MRAZ"/>
    <property type="match status" value="1"/>
</dbReference>
<dbReference type="Pfam" id="PF02381">
    <property type="entry name" value="MraZ"/>
    <property type="match status" value="2"/>
</dbReference>
<dbReference type="SUPFAM" id="SSF89447">
    <property type="entry name" value="AbrB/MazE/MraZ-like"/>
    <property type="match status" value="1"/>
</dbReference>
<dbReference type="PROSITE" id="PS51740">
    <property type="entry name" value="SPOVT_ABRB"/>
    <property type="match status" value="2"/>
</dbReference>
<keyword id="KW-0963">Cytoplasm</keyword>
<keyword id="KW-0238">DNA-binding</keyword>
<keyword id="KW-0677">Repeat</keyword>
<keyword id="KW-0804">Transcription</keyword>
<keyword id="KW-0805">Transcription regulation</keyword>
<proteinExistence type="inferred from homology"/>
<protein>
    <recommendedName>
        <fullName>Transcriptional regulator MraZ</fullName>
    </recommendedName>
</protein>
<evidence type="ECO:0000255" key="1">
    <source>
        <dbReference type="HAMAP-Rule" id="MF_01008"/>
    </source>
</evidence>
<evidence type="ECO:0000255" key="2">
    <source>
        <dbReference type="PROSITE-ProRule" id="PRU01076"/>
    </source>
</evidence>